<comment type="function">
    <text evidence="1">Catalyzes the dehydration of D-mannonate.</text>
</comment>
<comment type="catalytic activity">
    <reaction evidence="1">
        <text>D-mannonate = 2-dehydro-3-deoxy-D-gluconate + H2O</text>
        <dbReference type="Rhea" id="RHEA:20097"/>
        <dbReference type="ChEBI" id="CHEBI:15377"/>
        <dbReference type="ChEBI" id="CHEBI:17767"/>
        <dbReference type="ChEBI" id="CHEBI:57990"/>
        <dbReference type="EC" id="4.2.1.8"/>
    </reaction>
</comment>
<comment type="cofactor">
    <cofactor evidence="1">
        <name>Fe(2+)</name>
        <dbReference type="ChEBI" id="CHEBI:29033"/>
    </cofactor>
    <cofactor evidence="1">
        <name>Mn(2+)</name>
        <dbReference type="ChEBI" id="CHEBI:29035"/>
    </cofactor>
</comment>
<comment type="pathway">
    <text evidence="1">Carbohydrate metabolism; pentose and glucuronate interconversion.</text>
</comment>
<comment type="similarity">
    <text evidence="1">Belongs to the mannonate dehydratase family.</text>
</comment>
<name>UXUA_YERPS</name>
<protein>
    <recommendedName>
        <fullName evidence="1">Mannonate dehydratase</fullName>
        <ecNumber evidence="1">4.2.1.8</ecNumber>
    </recommendedName>
    <alternativeName>
        <fullName evidence="1">D-mannonate hydro-lyase</fullName>
    </alternativeName>
</protein>
<sequence>MEQTWRWYGPNDPVSLDDIRQAGATGVVTALHHIPNGVVWPVSEIKQRQAELAAKNLVWSVVESVPIHEDIKTHSGNYQQYIENYQQTLRNIAECGIDTVCYNFMPILDWTRTDLEYELPDGSKALRFDQIAFAAFELHILKRPGASNDYTAEEQVQAEAYFNAMTEADIAKLTGNIIAGLPGAEEGYTLDQFRARLAEYDGIDKAQLRENMAYFLRAIIPVAEQVGLRMAVHPDDPPRPILGLPRIVSTIEDMQWLKETVDSIHNGFTMCTGSYGVRADNDLVKMIETFGDRIHFTHLRSTCREGNPKTFHEGGHLQGDVDMYSVVKAILTEEQRRQSLGDMRPIPMRPDHGHQMLDDLHKKTNPGYSAIGRLKGLAEVRGVELALKRTFFPDLKQ</sequence>
<accession>Q66CT7</accession>
<evidence type="ECO:0000255" key="1">
    <source>
        <dbReference type="HAMAP-Rule" id="MF_00106"/>
    </source>
</evidence>
<reference key="1">
    <citation type="journal article" date="2004" name="Proc. Natl. Acad. Sci. U.S.A.">
        <title>Insights into the evolution of Yersinia pestis through whole-genome comparison with Yersinia pseudotuberculosis.</title>
        <authorList>
            <person name="Chain P.S.G."/>
            <person name="Carniel E."/>
            <person name="Larimer F.W."/>
            <person name="Lamerdin J."/>
            <person name="Stoutland P.O."/>
            <person name="Regala W.M."/>
            <person name="Georgescu A.M."/>
            <person name="Vergez L.M."/>
            <person name="Land M.L."/>
            <person name="Motin V.L."/>
            <person name="Brubaker R.R."/>
            <person name="Fowler J."/>
            <person name="Hinnebusch J."/>
            <person name="Marceau M."/>
            <person name="Medigue C."/>
            <person name="Simonet M."/>
            <person name="Chenal-Francisque V."/>
            <person name="Souza B."/>
            <person name="Dacheux D."/>
            <person name="Elliott J.M."/>
            <person name="Derbise A."/>
            <person name="Hauser L.J."/>
            <person name="Garcia E."/>
        </authorList>
    </citation>
    <scope>NUCLEOTIDE SEQUENCE [LARGE SCALE GENOMIC DNA]</scope>
    <source>
        <strain>IP32953</strain>
    </source>
</reference>
<keyword id="KW-0408">Iron</keyword>
<keyword id="KW-0456">Lyase</keyword>
<keyword id="KW-0464">Manganese</keyword>
<feature type="chain" id="PRO_0000170695" description="Mannonate dehydratase">
    <location>
        <begin position="1"/>
        <end position="397"/>
    </location>
</feature>
<gene>
    <name evidence="1" type="primary">uxuA</name>
    <name type="ordered locus">YPTB1315</name>
</gene>
<proteinExistence type="inferred from homology"/>
<dbReference type="EC" id="4.2.1.8" evidence="1"/>
<dbReference type="EMBL" id="BX936398">
    <property type="protein sequence ID" value="CAH20555.1"/>
    <property type="molecule type" value="Genomic_DNA"/>
</dbReference>
<dbReference type="RefSeq" id="WP_011192020.1">
    <property type="nucleotide sequence ID" value="NC_006155.1"/>
</dbReference>
<dbReference type="SMR" id="Q66CT7"/>
<dbReference type="GeneID" id="49786604"/>
<dbReference type="KEGG" id="ypo:BZ17_1206"/>
<dbReference type="KEGG" id="yps:YPTB1315"/>
<dbReference type="PATRIC" id="fig|273123.14.peg.1287"/>
<dbReference type="UniPathway" id="UPA00246"/>
<dbReference type="Proteomes" id="UP000001011">
    <property type="component" value="Chromosome"/>
</dbReference>
<dbReference type="GO" id="GO:0008198">
    <property type="term" value="F:ferrous iron binding"/>
    <property type="evidence" value="ECO:0007669"/>
    <property type="project" value="TreeGrafter"/>
</dbReference>
<dbReference type="GO" id="GO:0030145">
    <property type="term" value="F:manganese ion binding"/>
    <property type="evidence" value="ECO:0007669"/>
    <property type="project" value="TreeGrafter"/>
</dbReference>
<dbReference type="GO" id="GO:0008927">
    <property type="term" value="F:mannonate dehydratase activity"/>
    <property type="evidence" value="ECO:0007669"/>
    <property type="project" value="UniProtKB-UniRule"/>
</dbReference>
<dbReference type="GO" id="GO:0042840">
    <property type="term" value="P:D-glucuronate catabolic process"/>
    <property type="evidence" value="ECO:0007669"/>
    <property type="project" value="TreeGrafter"/>
</dbReference>
<dbReference type="FunFam" id="3.20.20.150:FF:000010">
    <property type="entry name" value="Mannonate dehydratase"/>
    <property type="match status" value="1"/>
</dbReference>
<dbReference type="Gene3D" id="3.20.20.150">
    <property type="entry name" value="Divalent-metal-dependent TIM barrel enzymes"/>
    <property type="match status" value="1"/>
</dbReference>
<dbReference type="HAMAP" id="MF_00106">
    <property type="entry name" value="UxuA"/>
    <property type="match status" value="1"/>
</dbReference>
<dbReference type="InterPro" id="IPR004628">
    <property type="entry name" value="Man_deHydtase"/>
</dbReference>
<dbReference type="InterPro" id="IPR036237">
    <property type="entry name" value="Xyl_isomerase-like_sf"/>
</dbReference>
<dbReference type="NCBIfam" id="NF003027">
    <property type="entry name" value="PRK03906.1"/>
    <property type="match status" value="1"/>
</dbReference>
<dbReference type="NCBIfam" id="TIGR00695">
    <property type="entry name" value="uxuA"/>
    <property type="match status" value="1"/>
</dbReference>
<dbReference type="PANTHER" id="PTHR30387">
    <property type="entry name" value="MANNONATE DEHYDRATASE"/>
    <property type="match status" value="1"/>
</dbReference>
<dbReference type="PANTHER" id="PTHR30387:SF2">
    <property type="entry name" value="MANNONATE DEHYDRATASE"/>
    <property type="match status" value="1"/>
</dbReference>
<dbReference type="Pfam" id="PF03786">
    <property type="entry name" value="UxuA"/>
    <property type="match status" value="1"/>
</dbReference>
<dbReference type="PIRSF" id="PIRSF016049">
    <property type="entry name" value="Man_dehyd"/>
    <property type="match status" value="1"/>
</dbReference>
<dbReference type="SUPFAM" id="SSF51658">
    <property type="entry name" value="Xylose isomerase-like"/>
    <property type="match status" value="1"/>
</dbReference>
<organism>
    <name type="scientific">Yersinia pseudotuberculosis serotype I (strain IP32953)</name>
    <dbReference type="NCBI Taxonomy" id="273123"/>
    <lineage>
        <taxon>Bacteria</taxon>
        <taxon>Pseudomonadati</taxon>
        <taxon>Pseudomonadota</taxon>
        <taxon>Gammaproteobacteria</taxon>
        <taxon>Enterobacterales</taxon>
        <taxon>Yersiniaceae</taxon>
        <taxon>Yersinia</taxon>
    </lineage>
</organism>